<gene>
    <name evidence="3" type="ordered locus">YHL046W-A</name>
</gene>
<evidence type="ECO:0000305" key="1"/>
<evidence type="ECO:0000305" key="2">
    <source>
    </source>
</evidence>
<evidence type="ECO:0000312" key="3">
    <source>
        <dbReference type="SGD" id="S000028775"/>
    </source>
</evidence>
<sequence length="108" mass="12274">MNAENRNIAFNCQVSYFLAISSDLRIINDFVPFNLSFISSLGDESSSIFSSTISSLQFFSVFLRFVWLERLSSGTSIIFPLAQRVTTVFGAQVERTQAKFFYQDLMSL</sequence>
<dbReference type="EMBL" id="KJ412255">
    <property type="protein sequence ID" value="AHX39298.1"/>
    <property type="molecule type" value="Genomic_DNA"/>
</dbReference>
<dbReference type="STRING" id="4932.YHL046W-A"/>
<dbReference type="PaxDb" id="4932-YHL046W-A"/>
<dbReference type="EnsemblFungi" id="YHL046W-A_mRNA">
    <property type="protein sequence ID" value="YHL046W-A"/>
    <property type="gene ID" value="YHL046W-A"/>
</dbReference>
<dbReference type="AGR" id="SGD:S000028775"/>
<dbReference type="SGD" id="S000028775">
    <property type="gene designation" value="YHL046W-A"/>
</dbReference>
<dbReference type="HOGENOM" id="CLU_2199062_0_0_1"/>
<accession>A0A023PYG5</accession>
<protein>
    <recommendedName>
        <fullName evidence="1">Putative uncharacterized protein YHL046W-A</fullName>
    </recommendedName>
</protein>
<reference key="1">
    <citation type="journal article" date="1994" name="Science">
        <title>Complete nucleotide sequence of Saccharomyces cerevisiae chromosome VIII.</title>
        <authorList>
            <person name="Johnston M."/>
            <person name="Andrews S."/>
            <person name="Brinkman R."/>
            <person name="Cooper J."/>
            <person name="Ding H."/>
            <person name="Dover J."/>
            <person name="Du Z."/>
            <person name="Favello A."/>
            <person name="Fulton L."/>
            <person name="Gattung S."/>
            <person name="Geisel C."/>
            <person name="Kirsten J."/>
            <person name="Kucaba T."/>
            <person name="Hillier L.W."/>
            <person name="Jier M."/>
            <person name="Johnston L."/>
            <person name="Langston Y."/>
            <person name="Latreille P."/>
            <person name="Louis E.J."/>
            <person name="Macri C."/>
            <person name="Mardis E."/>
            <person name="Menezes S."/>
            <person name="Mouser L."/>
            <person name="Nhan M."/>
            <person name="Rifkin L."/>
            <person name="Riles L."/>
            <person name="St Peter H."/>
            <person name="Trevaskis E."/>
            <person name="Vaughan K."/>
            <person name="Vignati D."/>
            <person name="Wilcox L."/>
            <person name="Wohldman P."/>
            <person name="Waterston R."/>
            <person name="Wilson R."/>
            <person name="Vaudin M."/>
        </authorList>
    </citation>
    <scope>NUCLEOTIDE SEQUENCE [LARGE SCALE GENOMIC DNA]</scope>
    <source>
        <strain>ATCC 204508 / S288c</strain>
    </source>
</reference>
<reference key="2">
    <citation type="journal article" date="2014" name="G3 (Bethesda)">
        <title>The reference genome sequence of Saccharomyces cerevisiae: Then and now.</title>
        <authorList>
            <person name="Engel S.R."/>
            <person name="Dietrich F.S."/>
            <person name="Fisk D.G."/>
            <person name="Binkley G."/>
            <person name="Balakrishnan R."/>
            <person name="Costanzo M.C."/>
            <person name="Dwight S.S."/>
            <person name="Hitz B.C."/>
            <person name="Karra K."/>
            <person name="Nash R.S."/>
            <person name="Weng S."/>
            <person name="Wong E.D."/>
            <person name="Lloyd P."/>
            <person name="Skrzypek M.S."/>
            <person name="Miyasato S.R."/>
            <person name="Simison M."/>
            <person name="Cherry J.M."/>
        </authorList>
    </citation>
    <scope>GENOME REANNOTATION</scope>
    <source>
        <strain>ATCC 204508 / S288c</strain>
    </source>
</reference>
<proteinExistence type="uncertain"/>
<name>YH046_YEAST</name>
<comment type="miscellaneous">
    <text evidence="1">Partially overlaps ARN2.</text>
</comment>
<comment type="caution">
    <text evidence="2">Product of a dubious gene prediction unlikely to encode a functional protein. Because of that it is not part of the S.cerevisiae S288c complete/reference proteome set.</text>
</comment>
<feature type="chain" id="PRO_0000431020" description="Putative uncharacterized protein YHL046W-A">
    <location>
        <begin position="1"/>
        <end position="108"/>
    </location>
</feature>
<organism>
    <name type="scientific">Saccharomyces cerevisiae (strain ATCC 204508 / S288c)</name>
    <name type="common">Baker's yeast</name>
    <dbReference type="NCBI Taxonomy" id="559292"/>
    <lineage>
        <taxon>Eukaryota</taxon>
        <taxon>Fungi</taxon>
        <taxon>Dikarya</taxon>
        <taxon>Ascomycota</taxon>
        <taxon>Saccharomycotina</taxon>
        <taxon>Saccharomycetes</taxon>
        <taxon>Saccharomycetales</taxon>
        <taxon>Saccharomycetaceae</taxon>
        <taxon>Saccharomyces</taxon>
    </lineage>
</organism>